<gene>
    <name evidence="1" type="primary">pyrD</name>
    <name type="ordered locus">ECED1_0968</name>
</gene>
<comment type="function">
    <text evidence="1">Catalyzes the conversion of dihydroorotate to orotate with quinone as electron acceptor.</text>
</comment>
<comment type="catalytic activity">
    <reaction evidence="1">
        <text>(S)-dihydroorotate + a quinone = orotate + a quinol</text>
        <dbReference type="Rhea" id="RHEA:30187"/>
        <dbReference type="ChEBI" id="CHEBI:24646"/>
        <dbReference type="ChEBI" id="CHEBI:30839"/>
        <dbReference type="ChEBI" id="CHEBI:30864"/>
        <dbReference type="ChEBI" id="CHEBI:132124"/>
        <dbReference type="EC" id="1.3.5.2"/>
    </reaction>
</comment>
<comment type="cofactor">
    <cofactor evidence="1">
        <name>FMN</name>
        <dbReference type="ChEBI" id="CHEBI:58210"/>
    </cofactor>
    <text evidence="1">Binds 1 FMN per subunit.</text>
</comment>
<comment type="pathway">
    <text evidence="1">Pyrimidine metabolism; UMP biosynthesis via de novo pathway; orotate from (S)-dihydroorotate (quinone route): step 1/1.</text>
</comment>
<comment type="subunit">
    <text evidence="1">Monomer.</text>
</comment>
<comment type="subcellular location">
    <subcellularLocation>
        <location evidence="1">Cell membrane</location>
        <topology evidence="1">Peripheral membrane protein</topology>
    </subcellularLocation>
</comment>
<comment type="similarity">
    <text evidence="1">Belongs to the dihydroorotate dehydrogenase family. Type 2 subfamily.</text>
</comment>
<name>PYRD_ECO81</name>
<accession>B7MS56</accession>
<sequence>MYYPFVRKALFQLDPERAHEFTFQQLRRITGTPFEALVRQKVPAKPVNCMGLTFKNPLGLAAGLDKDGECIDALGAMGFGSIEIGTVTPRPQPGNDKPRLFRLVDAEGLINRMGFNNLGVDNLVENVKKAHYDGVLGINIGKNKDTPVEQGKDDYLICMEKIYAYAGYIAINISSPNTPGLRTLQYGEALDDLLTAIKNKQNDLQVMHHKYVPIAVKIAPDLSEEELIQVADSLVRHNIDGVIATNTTLDRSLVQGMKNCDQTGGLSGRPLQLKSTEIIRRLSQELNGRLPIIGVGGIDSVIAAREKIAAGASLVQIYSGFIFKGPPLIKEIVTHI</sequence>
<protein>
    <recommendedName>
        <fullName evidence="1">Dihydroorotate dehydrogenase (quinone)</fullName>
        <ecNumber evidence="1">1.3.5.2</ecNumber>
    </recommendedName>
    <alternativeName>
        <fullName evidence="1">DHOdehase</fullName>
        <shortName evidence="1">DHOD</shortName>
        <shortName evidence="1">DHODase</shortName>
    </alternativeName>
    <alternativeName>
        <fullName evidence="1">Dihydroorotate oxidase</fullName>
    </alternativeName>
</protein>
<dbReference type="EC" id="1.3.5.2" evidence="1"/>
<dbReference type="EMBL" id="CU928162">
    <property type="protein sequence ID" value="CAR07170.1"/>
    <property type="molecule type" value="Genomic_DNA"/>
</dbReference>
<dbReference type="RefSeq" id="WP_001295934.1">
    <property type="nucleotide sequence ID" value="NC_011745.1"/>
</dbReference>
<dbReference type="SMR" id="B7MS56"/>
<dbReference type="KEGG" id="ecq:ECED1_0968"/>
<dbReference type="HOGENOM" id="CLU_013640_2_0_6"/>
<dbReference type="UniPathway" id="UPA00070">
    <property type="reaction ID" value="UER00946"/>
</dbReference>
<dbReference type="Proteomes" id="UP000000748">
    <property type="component" value="Chromosome"/>
</dbReference>
<dbReference type="GO" id="GO:0005737">
    <property type="term" value="C:cytoplasm"/>
    <property type="evidence" value="ECO:0007669"/>
    <property type="project" value="InterPro"/>
</dbReference>
<dbReference type="GO" id="GO:0005886">
    <property type="term" value="C:plasma membrane"/>
    <property type="evidence" value="ECO:0007669"/>
    <property type="project" value="UniProtKB-SubCell"/>
</dbReference>
<dbReference type="GO" id="GO:0106430">
    <property type="term" value="F:dihydroorotate dehydrogenase (quinone) activity"/>
    <property type="evidence" value="ECO:0007669"/>
    <property type="project" value="UniProtKB-EC"/>
</dbReference>
<dbReference type="GO" id="GO:0006207">
    <property type="term" value="P:'de novo' pyrimidine nucleobase biosynthetic process"/>
    <property type="evidence" value="ECO:0007669"/>
    <property type="project" value="InterPro"/>
</dbReference>
<dbReference type="GO" id="GO:0044205">
    <property type="term" value="P:'de novo' UMP biosynthetic process"/>
    <property type="evidence" value="ECO:0007669"/>
    <property type="project" value="UniProtKB-UniRule"/>
</dbReference>
<dbReference type="CDD" id="cd04738">
    <property type="entry name" value="DHOD_2_like"/>
    <property type="match status" value="1"/>
</dbReference>
<dbReference type="FunFam" id="3.20.20.70:FF:000028">
    <property type="entry name" value="Dihydroorotate dehydrogenase (quinone)"/>
    <property type="match status" value="1"/>
</dbReference>
<dbReference type="Gene3D" id="3.20.20.70">
    <property type="entry name" value="Aldolase class I"/>
    <property type="match status" value="1"/>
</dbReference>
<dbReference type="HAMAP" id="MF_00225">
    <property type="entry name" value="DHO_dh_type2"/>
    <property type="match status" value="1"/>
</dbReference>
<dbReference type="InterPro" id="IPR013785">
    <property type="entry name" value="Aldolase_TIM"/>
</dbReference>
<dbReference type="InterPro" id="IPR050074">
    <property type="entry name" value="DHO_dehydrogenase"/>
</dbReference>
<dbReference type="InterPro" id="IPR012135">
    <property type="entry name" value="Dihydroorotate_DH_1_2"/>
</dbReference>
<dbReference type="InterPro" id="IPR005719">
    <property type="entry name" value="Dihydroorotate_DH_2"/>
</dbReference>
<dbReference type="InterPro" id="IPR005720">
    <property type="entry name" value="Dihydroorotate_DH_cat"/>
</dbReference>
<dbReference type="InterPro" id="IPR001295">
    <property type="entry name" value="Dihydroorotate_DH_CS"/>
</dbReference>
<dbReference type="NCBIfam" id="NF003644">
    <property type="entry name" value="PRK05286.1-1"/>
    <property type="match status" value="1"/>
</dbReference>
<dbReference type="NCBIfam" id="NF003645">
    <property type="entry name" value="PRK05286.1-2"/>
    <property type="match status" value="1"/>
</dbReference>
<dbReference type="NCBIfam" id="NF003646">
    <property type="entry name" value="PRK05286.1-4"/>
    <property type="match status" value="1"/>
</dbReference>
<dbReference type="NCBIfam" id="NF003652">
    <property type="entry name" value="PRK05286.2-5"/>
    <property type="match status" value="1"/>
</dbReference>
<dbReference type="NCBIfam" id="TIGR01036">
    <property type="entry name" value="pyrD_sub2"/>
    <property type="match status" value="1"/>
</dbReference>
<dbReference type="PANTHER" id="PTHR48109:SF4">
    <property type="entry name" value="DIHYDROOROTATE DEHYDROGENASE (QUINONE), MITOCHONDRIAL"/>
    <property type="match status" value="1"/>
</dbReference>
<dbReference type="PANTHER" id="PTHR48109">
    <property type="entry name" value="DIHYDROOROTATE DEHYDROGENASE (QUINONE), MITOCHONDRIAL-RELATED"/>
    <property type="match status" value="1"/>
</dbReference>
<dbReference type="Pfam" id="PF01180">
    <property type="entry name" value="DHO_dh"/>
    <property type="match status" value="1"/>
</dbReference>
<dbReference type="PIRSF" id="PIRSF000164">
    <property type="entry name" value="DHO_oxidase"/>
    <property type="match status" value="1"/>
</dbReference>
<dbReference type="SUPFAM" id="SSF51395">
    <property type="entry name" value="FMN-linked oxidoreductases"/>
    <property type="match status" value="1"/>
</dbReference>
<dbReference type="PROSITE" id="PS00911">
    <property type="entry name" value="DHODEHASE_1"/>
    <property type="match status" value="1"/>
</dbReference>
<dbReference type="PROSITE" id="PS00912">
    <property type="entry name" value="DHODEHASE_2"/>
    <property type="match status" value="1"/>
</dbReference>
<feature type="chain" id="PRO_1000195076" description="Dihydroorotate dehydrogenase (quinone)">
    <location>
        <begin position="1"/>
        <end position="336"/>
    </location>
</feature>
<feature type="active site" description="Nucleophile" evidence="1">
    <location>
        <position position="175"/>
    </location>
</feature>
<feature type="binding site" evidence="1">
    <location>
        <begin position="62"/>
        <end position="66"/>
    </location>
    <ligand>
        <name>FMN</name>
        <dbReference type="ChEBI" id="CHEBI:58210"/>
    </ligand>
</feature>
<feature type="binding site" evidence="1">
    <location>
        <position position="66"/>
    </location>
    <ligand>
        <name>substrate</name>
    </ligand>
</feature>
<feature type="binding site" evidence="1">
    <location>
        <position position="86"/>
    </location>
    <ligand>
        <name>FMN</name>
        <dbReference type="ChEBI" id="CHEBI:58210"/>
    </ligand>
</feature>
<feature type="binding site" evidence="1">
    <location>
        <begin position="111"/>
        <end position="115"/>
    </location>
    <ligand>
        <name>substrate</name>
    </ligand>
</feature>
<feature type="binding site" evidence="1">
    <location>
        <position position="139"/>
    </location>
    <ligand>
        <name>FMN</name>
        <dbReference type="ChEBI" id="CHEBI:58210"/>
    </ligand>
</feature>
<feature type="binding site" evidence="1">
    <location>
        <position position="172"/>
    </location>
    <ligand>
        <name>FMN</name>
        <dbReference type="ChEBI" id="CHEBI:58210"/>
    </ligand>
</feature>
<feature type="binding site" evidence="1">
    <location>
        <position position="172"/>
    </location>
    <ligand>
        <name>substrate</name>
    </ligand>
</feature>
<feature type="binding site" evidence="1">
    <location>
        <position position="177"/>
    </location>
    <ligand>
        <name>substrate</name>
    </ligand>
</feature>
<feature type="binding site" evidence="1">
    <location>
        <position position="217"/>
    </location>
    <ligand>
        <name>FMN</name>
        <dbReference type="ChEBI" id="CHEBI:58210"/>
    </ligand>
</feature>
<feature type="binding site" evidence="1">
    <location>
        <position position="245"/>
    </location>
    <ligand>
        <name>FMN</name>
        <dbReference type="ChEBI" id="CHEBI:58210"/>
    </ligand>
</feature>
<feature type="binding site" evidence="1">
    <location>
        <begin position="246"/>
        <end position="247"/>
    </location>
    <ligand>
        <name>substrate</name>
    </ligand>
</feature>
<feature type="binding site" evidence="1">
    <location>
        <position position="268"/>
    </location>
    <ligand>
        <name>FMN</name>
        <dbReference type="ChEBI" id="CHEBI:58210"/>
    </ligand>
</feature>
<feature type="binding site" evidence="1">
    <location>
        <position position="297"/>
    </location>
    <ligand>
        <name>FMN</name>
        <dbReference type="ChEBI" id="CHEBI:58210"/>
    </ligand>
</feature>
<feature type="binding site" evidence="1">
    <location>
        <begin position="318"/>
        <end position="319"/>
    </location>
    <ligand>
        <name>FMN</name>
        <dbReference type="ChEBI" id="CHEBI:58210"/>
    </ligand>
</feature>
<proteinExistence type="inferred from homology"/>
<organism>
    <name type="scientific">Escherichia coli O81 (strain ED1a)</name>
    <dbReference type="NCBI Taxonomy" id="585397"/>
    <lineage>
        <taxon>Bacteria</taxon>
        <taxon>Pseudomonadati</taxon>
        <taxon>Pseudomonadota</taxon>
        <taxon>Gammaproteobacteria</taxon>
        <taxon>Enterobacterales</taxon>
        <taxon>Enterobacteriaceae</taxon>
        <taxon>Escherichia</taxon>
    </lineage>
</organism>
<evidence type="ECO:0000255" key="1">
    <source>
        <dbReference type="HAMAP-Rule" id="MF_00225"/>
    </source>
</evidence>
<reference key="1">
    <citation type="journal article" date="2009" name="PLoS Genet.">
        <title>Organised genome dynamics in the Escherichia coli species results in highly diverse adaptive paths.</title>
        <authorList>
            <person name="Touchon M."/>
            <person name="Hoede C."/>
            <person name="Tenaillon O."/>
            <person name="Barbe V."/>
            <person name="Baeriswyl S."/>
            <person name="Bidet P."/>
            <person name="Bingen E."/>
            <person name="Bonacorsi S."/>
            <person name="Bouchier C."/>
            <person name="Bouvet O."/>
            <person name="Calteau A."/>
            <person name="Chiapello H."/>
            <person name="Clermont O."/>
            <person name="Cruveiller S."/>
            <person name="Danchin A."/>
            <person name="Diard M."/>
            <person name="Dossat C."/>
            <person name="Karoui M.E."/>
            <person name="Frapy E."/>
            <person name="Garry L."/>
            <person name="Ghigo J.M."/>
            <person name="Gilles A.M."/>
            <person name="Johnson J."/>
            <person name="Le Bouguenec C."/>
            <person name="Lescat M."/>
            <person name="Mangenot S."/>
            <person name="Martinez-Jehanne V."/>
            <person name="Matic I."/>
            <person name="Nassif X."/>
            <person name="Oztas S."/>
            <person name="Petit M.A."/>
            <person name="Pichon C."/>
            <person name="Rouy Z."/>
            <person name="Ruf C.S."/>
            <person name="Schneider D."/>
            <person name="Tourret J."/>
            <person name="Vacherie B."/>
            <person name="Vallenet D."/>
            <person name="Medigue C."/>
            <person name="Rocha E.P.C."/>
            <person name="Denamur E."/>
        </authorList>
    </citation>
    <scope>NUCLEOTIDE SEQUENCE [LARGE SCALE GENOMIC DNA]</scope>
    <source>
        <strain>ED1a</strain>
    </source>
</reference>
<keyword id="KW-1003">Cell membrane</keyword>
<keyword id="KW-0285">Flavoprotein</keyword>
<keyword id="KW-0288">FMN</keyword>
<keyword id="KW-0472">Membrane</keyword>
<keyword id="KW-0560">Oxidoreductase</keyword>
<keyword id="KW-0665">Pyrimidine biosynthesis</keyword>